<keyword id="KW-0119">Carbohydrate metabolism</keyword>
<keyword id="KW-1003">Cell membrane</keyword>
<keyword id="KW-0328">Glycosyltransferase</keyword>
<keyword id="KW-0444">Lipid biosynthesis</keyword>
<keyword id="KW-0443">Lipid metabolism</keyword>
<keyword id="KW-0472">Membrane</keyword>
<keyword id="KW-0808">Transferase</keyword>
<reference key="1">
    <citation type="journal article" date="2004" name="Proc. Natl. Acad. Sci. U.S.A.">
        <title>Complete genomes of two clinical Staphylococcus aureus strains: evidence for the rapid evolution of virulence and drug resistance.</title>
        <authorList>
            <person name="Holden M.T.G."/>
            <person name="Feil E.J."/>
            <person name="Lindsay J.A."/>
            <person name="Peacock S.J."/>
            <person name="Day N.P.J."/>
            <person name="Enright M.C."/>
            <person name="Foster T.J."/>
            <person name="Moore C.E."/>
            <person name="Hurst L."/>
            <person name="Atkin R."/>
            <person name="Barron A."/>
            <person name="Bason N."/>
            <person name="Bentley S.D."/>
            <person name="Chillingworth C."/>
            <person name="Chillingworth T."/>
            <person name="Churcher C."/>
            <person name="Clark L."/>
            <person name="Corton C."/>
            <person name="Cronin A."/>
            <person name="Doggett J."/>
            <person name="Dowd L."/>
            <person name="Feltwell T."/>
            <person name="Hance Z."/>
            <person name="Harris B."/>
            <person name="Hauser H."/>
            <person name="Holroyd S."/>
            <person name="Jagels K."/>
            <person name="James K.D."/>
            <person name="Lennard N."/>
            <person name="Line A."/>
            <person name="Mayes R."/>
            <person name="Moule S."/>
            <person name="Mungall K."/>
            <person name="Ormond D."/>
            <person name="Quail M.A."/>
            <person name="Rabbinowitsch E."/>
            <person name="Rutherford K.M."/>
            <person name="Sanders M."/>
            <person name="Sharp S."/>
            <person name="Simmonds M."/>
            <person name="Stevens K."/>
            <person name="Whitehead S."/>
            <person name="Barrell B.G."/>
            <person name="Spratt B.G."/>
            <person name="Parkhill J."/>
        </authorList>
    </citation>
    <scope>NUCLEOTIDE SEQUENCE [LARGE SCALE GENOMIC DNA]</scope>
    <source>
        <strain>MRSA252</strain>
    </source>
</reference>
<dbReference type="EC" id="2.4.1.315"/>
<dbReference type="EMBL" id="BX571856">
    <property type="protein sequence ID" value="CAG39992.1"/>
    <property type="molecule type" value="Genomic_DNA"/>
</dbReference>
<dbReference type="RefSeq" id="WP_000258651.1">
    <property type="nucleotide sequence ID" value="NC_002952.2"/>
</dbReference>
<dbReference type="SMR" id="Q6GI67"/>
<dbReference type="CAZy" id="GT28">
    <property type="family name" value="Glycosyltransferase Family 28"/>
</dbReference>
<dbReference type="KEGG" id="sar:SAR0987"/>
<dbReference type="HOGENOM" id="CLU_028367_0_1_9"/>
<dbReference type="UniPathway" id="UPA00894"/>
<dbReference type="Proteomes" id="UP000000596">
    <property type="component" value="Chromosome"/>
</dbReference>
<dbReference type="GO" id="GO:0005886">
    <property type="term" value="C:plasma membrane"/>
    <property type="evidence" value="ECO:0007669"/>
    <property type="project" value="UniProtKB-SubCell"/>
</dbReference>
<dbReference type="GO" id="GO:0047228">
    <property type="term" value="F:1,2-diacylglycerol 3-glucosyltransferase activity"/>
    <property type="evidence" value="ECO:0007669"/>
    <property type="project" value="UniProtKB-UniRule"/>
</dbReference>
<dbReference type="GO" id="GO:0009246">
    <property type="term" value="P:enterobacterial common antigen biosynthetic process"/>
    <property type="evidence" value="ECO:0007669"/>
    <property type="project" value="UniProtKB-UniPathway"/>
</dbReference>
<dbReference type="GO" id="GO:0009247">
    <property type="term" value="P:glycolipid biosynthetic process"/>
    <property type="evidence" value="ECO:0007669"/>
    <property type="project" value="UniProtKB-UniRule"/>
</dbReference>
<dbReference type="GO" id="GO:0070395">
    <property type="term" value="P:lipoteichoic acid biosynthetic process"/>
    <property type="evidence" value="ECO:0007669"/>
    <property type="project" value="UniProtKB-UniRule"/>
</dbReference>
<dbReference type="CDD" id="cd17507">
    <property type="entry name" value="GT28_Beta-DGS-like"/>
    <property type="match status" value="1"/>
</dbReference>
<dbReference type="Gene3D" id="3.40.50.2000">
    <property type="entry name" value="Glycogen Phosphorylase B"/>
    <property type="match status" value="2"/>
</dbReference>
<dbReference type="HAMAP" id="MF_01280">
    <property type="entry name" value="Diacylglyc_glucosyltr"/>
    <property type="match status" value="1"/>
</dbReference>
<dbReference type="InterPro" id="IPR009695">
    <property type="entry name" value="Diacylglyc_glucosyltr_N"/>
</dbReference>
<dbReference type="InterPro" id="IPR007235">
    <property type="entry name" value="Glyco_trans_28_C"/>
</dbReference>
<dbReference type="InterPro" id="IPR050519">
    <property type="entry name" value="Glycosyltransf_28_UgtP"/>
</dbReference>
<dbReference type="InterPro" id="IPR023589">
    <property type="entry name" value="Pro_diacylglycrl_glcsylTrfase"/>
</dbReference>
<dbReference type="NCBIfam" id="NF010134">
    <property type="entry name" value="PRK13608.1"/>
    <property type="match status" value="1"/>
</dbReference>
<dbReference type="PANTHER" id="PTHR43025">
    <property type="entry name" value="MONOGALACTOSYLDIACYLGLYCEROL SYNTHASE"/>
    <property type="match status" value="1"/>
</dbReference>
<dbReference type="PANTHER" id="PTHR43025:SF3">
    <property type="entry name" value="MONOGALACTOSYLDIACYLGLYCEROL SYNTHASE 1, CHLOROPLASTIC"/>
    <property type="match status" value="1"/>
</dbReference>
<dbReference type="Pfam" id="PF04101">
    <property type="entry name" value="Glyco_tran_28_C"/>
    <property type="match status" value="1"/>
</dbReference>
<dbReference type="Pfam" id="PF06925">
    <property type="entry name" value="MGDG_synth"/>
    <property type="match status" value="1"/>
</dbReference>
<dbReference type="SUPFAM" id="SSF53756">
    <property type="entry name" value="UDP-Glycosyltransferase/glycogen phosphorylase"/>
    <property type="match status" value="1"/>
</dbReference>
<comment type="function">
    <text evidence="1">Processive glucosyltransferase involved in the biosynthesis of both the bilayer- and non-bilayer-forming membrane glucolipids. Is able to successively transfer two glucosyl residues to diacylglycerol (DAG), thereby catalyzing the formation of beta-monoglucosyl-DAG (3-O-(beta-D-glucopyranosyl)-1,2-diacyl-sn-glycerol) and beta-diglucosyl-DAG (3-O-(beta-D-glucopyranosyl-beta-(1-&gt;6)-D-glucopyranosyl)-1,2-diacyl-sn-glycerol). Beta-diglucosyl-DAG is the predominant glycolipid found in Bacillales and is also used as a membrane anchor for lipoteichoic acid (LTA).</text>
</comment>
<comment type="catalytic activity">
    <reaction>
        <text>a 1,2-diacyl-3-O-(beta-D-glucopyranosyl)-sn-glycerol + UDP-alpha-D-glucose = a 1,2-diacyl-3-O-(beta-D-Glc-(1-&gt;6)-beta-D-Glc)-sn-glycerol + UDP + H(+)</text>
        <dbReference type="Rhea" id="RHEA:39031"/>
        <dbReference type="ChEBI" id="CHEBI:15378"/>
        <dbReference type="ChEBI" id="CHEBI:58223"/>
        <dbReference type="ChEBI" id="CHEBI:58885"/>
        <dbReference type="ChEBI" id="CHEBI:75799"/>
        <dbReference type="ChEBI" id="CHEBI:76264"/>
        <dbReference type="EC" id="2.4.1.315"/>
    </reaction>
</comment>
<comment type="catalytic activity">
    <reaction evidence="1">
        <text>a 1,2-diacyl-sn-glycerol + UDP-alpha-D-glucose = a 1,2-diacyl-3-O-(beta-D-glucopyranosyl)-sn-glycerol + UDP + H(+)</text>
        <dbReference type="Rhea" id="RHEA:17285"/>
        <dbReference type="ChEBI" id="CHEBI:15378"/>
        <dbReference type="ChEBI" id="CHEBI:17815"/>
        <dbReference type="ChEBI" id="CHEBI:58223"/>
        <dbReference type="ChEBI" id="CHEBI:58885"/>
        <dbReference type="ChEBI" id="CHEBI:75799"/>
    </reaction>
</comment>
<comment type="pathway">
    <text evidence="1">Glycolipid metabolism; diglucosyl-diacylglycerol biosynthesis.</text>
</comment>
<comment type="subcellular location">
    <subcellularLocation>
        <location evidence="1">Cell membrane</location>
    </subcellularLocation>
</comment>
<comment type="similarity">
    <text evidence="1">Belongs to the glycosyltransferase 28 family. UgtP subfamily.</text>
</comment>
<proteinExistence type="inferred from homology"/>
<accession>Q6GI67</accession>
<organism>
    <name type="scientific">Staphylococcus aureus (strain MRSA252)</name>
    <dbReference type="NCBI Taxonomy" id="282458"/>
    <lineage>
        <taxon>Bacteria</taxon>
        <taxon>Bacillati</taxon>
        <taxon>Bacillota</taxon>
        <taxon>Bacilli</taxon>
        <taxon>Bacillales</taxon>
        <taxon>Staphylococcaceae</taxon>
        <taxon>Staphylococcus</taxon>
    </lineage>
</organism>
<gene>
    <name evidence="1" type="primary">ugtP</name>
    <name type="ordered locus">SAR0987</name>
</gene>
<evidence type="ECO:0000255" key="1">
    <source>
        <dbReference type="HAMAP-Rule" id="MF_01280"/>
    </source>
</evidence>
<sequence>MVTQNKKILIITGSFGNGHMQVTQSIVNQLNDMNLDHLSVIEHDLFMEAHPILTSICKKWYINSFKYFRNMYKGFYYSRPDKLNKCFYKYYGLNKLINLLIKEKPDLILLTFPTPVMSVLTEQFNINIPVATVMTDYRLHKNWITPYSTRYYVATKETKQDFIDVGIDPSTVKVTGIPIDNKFETPINQKQWLIDNNLDPDKQTILMSAGAFGVSKGFDTMITDILAKSANAQVVMICGKSKELKRSLTAKFKSNENVLILGYTKHMNEWMASSQLMITKPGGITITEGFARCIPMIFLNPAPGQELENALYFEEKGFGKIADTPEEAIKIVASLTNGNEQLTNMISTMEQDKIKYATQTICQDLLDLIGHSSQPQEIYGKVPLYARFFVK</sequence>
<name>UGTP_STAAR</name>
<protein>
    <recommendedName>
        <fullName evidence="1">Processive diacylglycerol beta-glucosyltransferase</fullName>
        <ecNumber>2.4.1.315</ecNumber>
    </recommendedName>
    <alternativeName>
        <fullName evidence="1">Beta-diglucosyldiacylglycerol synthase</fullName>
        <shortName evidence="1">Beta-DGS</shortName>
        <shortName evidence="1">DGlcDAG synthase</shortName>
        <shortName evidence="1">Glc2-DAG synthase</shortName>
    </alternativeName>
    <alternativeName>
        <fullName evidence="1">Beta-gentiobiosyldiacylglycerol synthase</fullName>
    </alternativeName>
    <alternativeName>
        <fullName evidence="1">Beta-monoglucosyldiacylglycerol synthase</fullName>
        <shortName evidence="1">Beta-MGS</shortName>
        <shortName evidence="1">MGlcDAG synthase</shortName>
    </alternativeName>
    <alternativeName>
        <fullName>Diglucosyl diacylglycerol synthase (1,6-linking)</fullName>
    </alternativeName>
    <alternativeName>
        <fullName evidence="1">Glucosyl-beta-1,6-glucosyldiacylglycerol synthase</fullName>
    </alternativeName>
    <alternativeName>
        <fullName evidence="1">UDP glucosyltransferase</fullName>
    </alternativeName>
    <alternativeName>
        <fullName evidence="1">UDP-glucose:1,2-diacylglycerol-3-beta-D-glucosyltransferase</fullName>
    </alternativeName>
</protein>
<feature type="chain" id="PRO_0000308457" description="Processive diacylglycerol beta-glucosyltransferase">
    <location>
        <begin position="1"/>
        <end position="391"/>
    </location>
</feature>